<accession>Q9VWY6</accession>
<accession>O18398</accession>
<accession>Q8SYE2</accession>
<name>TAF8_DROME</name>
<evidence type="ECO:0000255" key="1"/>
<evidence type="ECO:0000256" key="2">
    <source>
        <dbReference type="SAM" id="MobiDB-lite"/>
    </source>
</evidence>
<evidence type="ECO:0000269" key="3">
    <source>
    </source>
</evidence>
<evidence type="ECO:0000269" key="4">
    <source>
    </source>
</evidence>
<evidence type="ECO:0000269" key="5">
    <source>
    </source>
</evidence>
<evidence type="ECO:0000269" key="6">
    <source>
    </source>
</evidence>
<evidence type="ECO:0000303" key="7">
    <source>
    </source>
</evidence>
<evidence type="ECO:0000305" key="8"/>
<evidence type="ECO:0000312" key="9">
    <source>
        <dbReference type="EMBL" id="AAF48800.1"/>
    </source>
</evidence>
<evidence type="ECO:0000312" key="10">
    <source>
        <dbReference type="EMBL" id="AAL49226.1"/>
    </source>
</evidence>
<evidence type="ECO:0000312" key="11">
    <source>
        <dbReference type="EMBL" id="CAA75667.1"/>
    </source>
</evidence>
<sequence length="328" mass="36649">MEKVEAVTVSNVDPYRRILNKVVSQLLLDKGAGQASNHSLETLTQMLQALIWEIGNSAHNYCELSGRTMPTVGDVSLALINMGISISNLDPYMRKETHVPIPLPPQQTQQRPLSLLQAGIKAPHPHYVPSYFPPMPDPHAYIRTPTHKQPVTEYEAIREKAACQKRDIEKALTKFLCKTTETNNLFPTEDNMFPLIACKPAFPPYAAALNPTDQVFDFEELEYHYLVANRTEDEPSKDDGEEGDSENEEMDGDKSKEEKPELDIKPNSNTNKAILENPNIDNPYLRAATLPKRSKNCPTPGTMPSRSLATTAPTIRTPSTLEITKTNL</sequence>
<keyword id="KW-0539">Nucleus</keyword>
<keyword id="KW-0597">Phosphoprotein</keyword>
<keyword id="KW-1185">Reference proteome</keyword>
<keyword id="KW-0804">Transcription</keyword>
<keyword id="KW-0805">Transcription regulation</keyword>
<proteinExistence type="evidence at protein level"/>
<comment type="function">
    <text evidence="4">TFIID is a multimeric protein complex that plays a central role in mediating promoter responses to various activators and repressors.</text>
</comment>
<comment type="subunit">
    <text evidence="4">Belongs to the TFIID complex which is composed of TATA binding protein (Tbp) and a number of TBP-associated factors (TAFs). Histone fold interacts with N-terminus of Taf10b.</text>
</comment>
<comment type="subcellular location">
    <subcellularLocation>
        <location>Nucleus</location>
    </subcellularLocation>
</comment>
<comment type="similarity">
    <text evidence="1">Belongs to the TAF8 family.</text>
</comment>
<gene>
    <name evidence="9" type="primary">Taf8</name>
    <name evidence="7" type="synonym">pds</name>
    <name evidence="11" type="synonym">prod</name>
    <name type="ORF">CG7128</name>
</gene>
<feature type="chain" id="PRO_0000118886" description="Transcription initiation factor TFIID subunit 8">
    <location>
        <begin position="1"/>
        <end position="328"/>
    </location>
</feature>
<feature type="domain" description="Histone-fold" evidence="1">
    <location>
        <begin position="16"/>
        <end position="83"/>
    </location>
</feature>
<feature type="region of interest" description="Disordered" evidence="2">
    <location>
        <begin position="229"/>
        <end position="309"/>
    </location>
</feature>
<feature type="compositionally biased region" description="Acidic residues" evidence="2">
    <location>
        <begin position="239"/>
        <end position="251"/>
    </location>
</feature>
<feature type="compositionally biased region" description="Basic and acidic residues" evidence="2">
    <location>
        <begin position="252"/>
        <end position="264"/>
    </location>
</feature>
<feature type="compositionally biased region" description="Polar residues" evidence="2">
    <location>
        <begin position="296"/>
        <end position="309"/>
    </location>
</feature>
<feature type="modified residue" description="Phosphoserine" evidence="6">
    <location>
        <position position="236"/>
    </location>
</feature>
<feature type="modified residue" description="Phosphoserine" evidence="6">
    <location>
        <position position="245"/>
    </location>
</feature>
<feature type="modified residue" description="Phosphoserine" evidence="6">
    <location>
        <position position="255"/>
    </location>
</feature>
<feature type="sequence conflict" description="In Ref. 1; CAA75667." evidence="8" ref="1">
    <original>Q</original>
    <variation>H</variation>
    <location>
        <position position="164"/>
    </location>
</feature>
<feature type="sequence conflict" description="In Ref. 4; AAL49226." evidence="8" ref="4">
    <original>M</original>
    <variation>I</variation>
    <location>
        <position position="250"/>
    </location>
</feature>
<organism>
    <name type="scientific">Drosophila melanogaster</name>
    <name type="common">Fruit fly</name>
    <dbReference type="NCBI Taxonomy" id="7227"/>
    <lineage>
        <taxon>Eukaryota</taxon>
        <taxon>Metazoa</taxon>
        <taxon>Ecdysozoa</taxon>
        <taxon>Arthropoda</taxon>
        <taxon>Hexapoda</taxon>
        <taxon>Insecta</taxon>
        <taxon>Pterygota</taxon>
        <taxon>Neoptera</taxon>
        <taxon>Endopterygota</taxon>
        <taxon>Diptera</taxon>
        <taxon>Brachycera</taxon>
        <taxon>Muscomorpha</taxon>
        <taxon>Ephydroidea</taxon>
        <taxon>Drosophilidae</taxon>
        <taxon>Drosophila</taxon>
        <taxon>Sophophora</taxon>
    </lineage>
</organism>
<protein>
    <recommendedName>
        <fullName>Transcription initiation factor TFIID subunit 8</fullName>
    </recommendedName>
    <alternativeName>
        <fullName>Protein prodos</fullName>
    </alternativeName>
</protein>
<dbReference type="EMBL" id="Y15513">
    <property type="protein sequence ID" value="CAA75667.1"/>
    <property type="molecule type" value="Genomic_DNA"/>
</dbReference>
<dbReference type="EMBL" id="AE014298">
    <property type="protein sequence ID" value="AAF48800.1"/>
    <property type="molecule type" value="Genomic_DNA"/>
</dbReference>
<dbReference type="EMBL" id="AY071604">
    <property type="protein sequence ID" value="AAL49226.1"/>
    <property type="molecule type" value="mRNA"/>
</dbReference>
<dbReference type="RefSeq" id="NP_523397.1">
    <property type="nucleotide sequence ID" value="NM_078673.4"/>
</dbReference>
<dbReference type="SMR" id="Q9VWY6"/>
<dbReference type="BioGRID" id="59112">
    <property type="interactions" value="8"/>
</dbReference>
<dbReference type="FunCoup" id="Q9VWY6">
    <property type="interactions" value="1458"/>
</dbReference>
<dbReference type="IntAct" id="Q9VWY6">
    <property type="interactions" value="6"/>
</dbReference>
<dbReference type="STRING" id="7227.FBpp0074288"/>
<dbReference type="GlyGen" id="Q9VWY6">
    <property type="glycosylation" value="1 site"/>
</dbReference>
<dbReference type="iPTMnet" id="Q9VWY6"/>
<dbReference type="PaxDb" id="7227-FBpp0074288"/>
<dbReference type="DNASU" id="32792"/>
<dbReference type="EnsemblMetazoa" id="FBtr0074514">
    <property type="protein sequence ID" value="FBpp0074288"/>
    <property type="gene ID" value="FBgn0022724"/>
</dbReference>
<dbReference type="GeneID" id="32792"/>
<dbReference type="KEGG" id="dme:Dmel_CG7128"/>
<dbReference type="AGR" id="FB:FBgn0022724"/>
<dbReference type="CTD" id="129685"/>
<dbReference type="FlyBase" id="FBgn0022724">
    <property type="gene designation" value="Taf8"/>
</dbReference>
<dbReference type="VEuPathDB" id="VectorBase:FBgn0022724"/>
<dbReference type="eggNOG" id="KOG4336">
    <property type="taxonomic scope" value="Eukaryota"/>
</dbReference>
<dbReference type="GeneTree" id="ENSGT00390000017567"/>
<dbReference type="HOGENOM" id="CLU_070829_0_0_1"/>
<dbReference type="InParanoid" id="Q9VWY6"/>
<dbReference type="OMA" id="SAHNYCE"/>
<dbReference type="OrthoDB" id="2193813at2759"/>
<dbReference type="PhylomeDB" id="Q9VWY6"/>
<dbReference type="Reactome" id="R-DME-6807505">
    <property type="pathway name" value="RNA polymerase II transcribes snRNA genes"/>
</dbReference>
<dbReference type="BioGRID-ORCS" id="32792">
    <property type="hits" value="1 hit in 1 CRISPR screen"/>
</dbReference>
<dbReference type="GenomeRNAi" id="32792"/>
<dbReference type="PRO" id="PR:Q9VWY6"/>
<dbReference type="Proteomes" id="UP000000803">
    <property type="component" value="Chromosome X"/>
</dbReference>
<dbReference type="Bgee" id="FBgn0022724">
    <property type="expression patterns" value="Expressed in cleaving embryo and 53 other cell types or tissues"/>
</dbReference>
<dbReference type="ExpressionAtlas" id="Q9VWY6">
    <property type="expression patterns" value="baseline and differential"/>
</dbReference>
<dbReference type="GO" id="GO:0005669">
    <property type="term" value="C:transcription factor TFIID complex"/>
    <property type="evidence" value="ECO:0000314"/>
    <property type="project" value="UniProtKB"/>
</dbReference>
<dbReference type="GO" id="GO:0046982">
    <property type="term" value="F:protein heterodimerization activity"/>
    <property type="evidence" value="ECO:0007669"/>
    <property type="project" value="InterPro"/>
</dbReference>
<dbReference type="GO" id="GO:0006367">
    <property type="term" value="P:transcription initiation at RNA polymerase II promoter"/>
    <property type="evidence" value="ECO:0000314"/>
    <property type="project" value="UniProtKB"/>
</dbReference>
<dbReference type="CDD" id="cd22918">
    <property type="entry name" value="HFD_TAF8"/>
    <property type="match status" value="1"/>
</dbReference>
<dbReference type="CDD" id="cd08049">
    <property type="entry name" value="TAF8"/>
    <property type="match status" value="1"/>
</dbReference>
<dbReference type="FunFam" id="1.10.20.10:FF:000204">
    <property type="match status" value="1"/>
</dbReference>
<dbReference type="Gene3D" id="1.10.20.10">
    <property type="entry name" value="Histone, subunit A"/>
    <property type="match status" value="1"/>
</dbReference>
<dbReference type="InterPro" id="IPR006565">
    <property type="entry name" value="BTP"/>
</dbReference>
<dbReference type="InterPro" id="IPR009072">
    <property type="entry name" value="Histone-fold"/>
</dbReference>
<dbReference type="InterPro" id="IPR037818">
    <property type="entry name" value="TAF8"/>
</dbReference>
<dbReference type="InterPro" id="IPR019473">
    <property type="entry name" value="TFIID_su8_C"/>
</dbReference>
<dbReference type="PANTHER" id="PTHR46469">
    <property type="entry name" value="TRANSCRIPTION INITIATION FACTOR TFIID SUBUNIT 8"/>
    <property type="match status" value="1"/>
</dbReference>
<dbReference type="PANTHER" id="PTHR46469:SF1">
    <property type="entry name" value="TRANSCRIPTION INITIATION FACTOR TFIID SUBUNIT 8"/>
    <property type="match status" value="1"/>
</dbReference>
<dbReference type="Pfam" id="PF07524">
    <property type="entry name" value="Bromo_TP"/>
    <property type="match status" value="1"/>
</dbReference>
<dbReference type="Pfam" id="PF10406">
    <property type="entry name" value="TAF8_C"/>
    <property type="match status" value="1"/>
</dbReference>
<dbReference type="SMART" id="SM00576">
    <property type="entry name" value="BTP"/>
    <property type="match status" value="1"/>
</dbReference>
<dbReference type="SUPFAM" id="SSF47113">
    <property type="entry name" value="Histone-fold"/>
    <property type="match status" value="1"/>
</dbReference>
<reference evidence="11" key="1">
    <citation type="submission" date="1997-11" db="EMBL/GenBank/DDBJ databases">
        <authorList>
            <person name="Ortuno-Sahagun D."/>
        </authorList>
    </citation>
    <scope>NUCLEOTIDE SEQUENCE [GENOMIC DNA]</scope>
    <source>
        <strain evidence="11">Canton-S</strain>
    </source>
</reference>
<reference evidence="9" key="2">
    <citation type="journal article" date="2000" name="Science">
        <title>The genome sequence of Drosophila melanogaster.</title>
        <authorList>
            <person name="Adams M.D."/>
            <person name="Celniker S.E."/>
            <person name="Holt R.A."/>
            <person name="Evans C.A."/>
            <person name="Gocayne J.D."/>
            <person name="Amanatides P.G."/>
            <person name="Scherer S.E."/>
            <person name="Li P.W."/>
            <person name="Hoskins R.A."/>
            <person name="Galle R.F."/>
            <person name="George R.A."/>
            <person name="Lewis S.E."/>
            <person name="Richards S."/>
            <person name="Ashburner M."/>
            <person name="Henderson S.N."/>
            <person name="Sutton G.G."/>
            <person name="Wortman J.R."/>
            <person name="Yandell M.D."/>
            <person name="Zhang Q."/>
            <person name="Chen L.X."/>
            <person name="Brandon R.C."/>
            <person name="Rogers Y.-H.C."/>
            <person name="Blazej R.G."/>
            <person name="Champe M."/>
            <person name="Pfeiffer B.D."/>
            <person name="Wan K.H."/>
            <person name="Doyle C."/>
            <person name="Baxter E.G."/>
            <person name="Helt G."/>
            <person name="Nelson C.R."/>
            <person name="Miklos G.L.G."/>
            <person name="Abril J.F."/>
            <person name="Agbayani A."/>
            <person name="An H.-J."/>
            <person name="Andrews-Pfannkoch C."/>
            <person name="Baldwin D."/>
            <person name="Ballew R.M."/>
            <person name="Basu A."/>
            <person name="Baxendale J."/>
            <person name="Bayraktaroglu L."/>
            <person name="Beasley E.M."/>
            <person name="Beeson K.Y."/>
            <person name="Benos P.V."/>
            <person name="Berman B.P."/>
            <person name="Bhandari D."/>
            <person name="Bolshakov S."/>
            <person name="Borkova D."/>
            <person name="Botchan M.R."/>
            <person name="Bouck J."/>
            <person name="Brokstein P."/>
            <person name="Brottier P."/>
            <person name="Burtis K.C."/>
            <person name="Busam D.A."/>
            <person name="Butler H."/>
            <person name="Cadieu E."/>
            <person name="Center A."/>
            <person name="Chandra I."/>
            <person name="Cherry J.M."/>
            <person name="Cawley S."/>
            <person name="Dahlke C."/>
            <person name="Davenport L.B."/>
            <person name="Davies P."/>
            <person name="de Pablos B."/>
            <person name="Delcher A."/>
            <person name="Deng Z."/>
            <person name="Mays A.D."/>
            <person name="Dew I."/>
            <person name="Dietz S.M."/>
            <person name="Dodson K."/>
            <person name="Doup L.E."/>
            <person name="Downes M."/>
            <person name="Dugan-Rocha S."/>
            <person name="Dunkov B.C."/>
            <person name="Dunn P."/>
            <person name="Durbin K.J."/>
            <person name="Evangelista C.C."/>
            <person name="Ferraz C."/>
            <person name="Ferriera S."/>
            <person name="Fleischmann W."/>
            <person name="Fosler C."/>
            <person name="Gabrielian A.E."/>
            <person name="Garg N.S."/>
            <person name="Gelbart W.M."/>
            <person name="Glasser K."/>
            <person name="Glodek A."/>
            <person name="Gong F."/>
            <person name="Gorrell J.H."/>
            <person name="Gu Z."/>
            <person name="Guan P."/>
            <person name="Harris M."/>
            <person name="Harris N.L."/>
            <person name="Harvey D.A."/>
            <person name="Heiman T.J."/>
            <person name="Hernandez J.R."/>
            <person name="Houck J."/>
            <person name="Hostin D."/>
            <person name="Houston K.A."/>
            <person name="Howland T.J."/>
            <person name="Wei M.-H."/>
            <person name="Ibegwam C."/>
            <person name="Jalali M."/>
            <person name="Kalush F."/>
            <person name="Karpen G.H."/>
            <person name="Ke Z."/>
            <person name="Kennison J.A."/>
            <person name="Ketchum K.A."/>
            <person name="Kimmel B.E."/>
            <person name="Kodira C.D."/>
            <person name="Kraft C.L."/>
            <person name="Kravitz S."/>
            <person name="Kulp D."/>
            <person name="Lai Z."/>
            <person name="Lasko P."/>
            <person name="Lei Y."/>
            <person name="Levitsky A.A."/>
            <person name="Li J.H."/>
            <person name="Li Z."/>
            <person name="Liang Y."/>
            <person name="Lin X."/>
            <person name="Liu X."/>
            <person name="Mattei B."/>
            <person name="McIntosh T.C."/>
            <person name="McLeod M.P."/>
            <person name="McPherson D."/>
            <person name="Merkulov G."/>
            <person name="Milshina N.V."/>
            <person name="Mobarry C."/>
            <person name="Morris J."/>
            <person name="Moshrefi A."/>
            <person name="Mount S.M."/>
            <person name="Moy M."/>
            <person name="Murphy B."/>
            <person name="Murphy L."/>
            <person name="Muzny D.M."/>
            <person name="Nelson D.L."/>
            <person name="Nelson D.R."/>
            <person name="Nelson K.A."/>
            <person name="Nixon K."/>
            <person name="Nusskern D.R."/>
            <person name="Pacleb J.M."/>
            <person name="Palazzolo M."/>
            <person name="Pittman G.S."/>
            <person name="Pan S."/>
            <person name="Pollard J."/>
            <person name="Puri V."/>
            <person name="Reese M.G."/>
            <person name="Reinert K."/>
            <person name="Remington K."/>
            <person name="Saunders R.D.C."/>
            <person name="Scheeler F."/>
            <person name="Shen H."/>
            <person name="Shue B.C."/>
            <person name="Siden-Kiamos I."/>
            <person name="Simpson M."/>
            <person name="Skupski M.P."/>
            <person name="Smith T.J."/>
            <person name="Spier E."/>
            <person name="Spradling A.C."/>
            <person name="Stapleton M."/>
            <person name="Strong R."/>
            <person name="Sun E."/>
            <person name="Svirskas R."/>
            <person name="Tector C."/>
            <person name="Turner R."/>
            <person name="Venter E."/>
            <person name="Wang A.H."/>
            <person name="Wang X."/>
            <person name="Wang Z.-Y."/>
            <person name="Wassarman D.A."/>
            <person name="Weinstock G.M."/>
            <person name="Weissenbach J."/>
            <person name="Williams S.M."/>
            <person name="Woodage T."/>
            <person name="Worley K.C."/>
            <person name="Wu D."/>
            <person name="Yang S."/>
            <person name="Yao Q.A."/>
            <person name="Ye J."/>
            <person name="Yeh R.-F."/>
            <person name="Zaveri J.S."/>
            <person name="Zhan M."/>
            <person name="Zhang G."/>
            <person name="Zhao Q."/>
            <person name="Zheng L."/>
            <person name="Zheng X.H."/>
            <person name="Zhong F.N."/>
            <person name="Zhong W."/>
            <person name="Zhou X."/>
            <person name="Zhu S.C."/>
            <person name="Zhu X."/>
            <person name="Smith H.O."/>
            <person name="Gibbs R.A."/>
            <person name="Myers E.W."/>
            <person name="Rubin G.M."/>
            <person name="Venter J.C."/>
        </authorList>
    </citation>
    <scope>NUCLEOTIDE SEQUENCE [LARGE SCALE GENOMIC DNA]</scope>
    <source>
        <strain evidence="3">Berkeley</strain>
    </source>
</reference>
<reference evidence="8 9" key="3">
    <citation type="journal article" date="2002" name="Genome Biol.">
        <title>Annotation of the Drosophila melanogaster euchromatic genome: a systematic review.</title>
        <authorList>
            <person name="Misra S."/>
            <person name="Crosby M.A."/>
            <person name="Mungall C.J."/>
            <person name="Matthews B.B."/>
            <person name="Campbell K.S."/>
            <person name="Hradecky P."/>
            <person name="Huang Y."/>
            <person name="Kaminker J.S."/>
            <person name="Millburn G.H."/>
            <person name="Prochnik S.E."/>
            <person name="Smith C.D."/>
            <person name="Tupy J.L."/>
            <person name="Whitfield E.J."/>
            <person name="Bayraktaroglu L."/>
            <person name="Berman B.P."/>
            <person name="Bettencourt B.R."/>
            <person name="Celniker S.E."/>
            <person name="de Grey A.D.N.J."/>
            <person name="Drysdale R.A."/>
            <person name="Harris N.L."/>
            <person name="Richter J."/>
            <person name="Russo S."/>
            <person name="Schroeder A.J."/>
            <person name="Shu S.Q."/>
            <person name="Stapleton M."/>
            <person name="Yamada C."/>
            <person name="Ashburner M."/>
            <person name="Gelbart W.M."/>
            <person name="Rubin G.M."/>
            <person name="Lewis S.E."/>
        </authorList>
    </citation>
    <scope>GENOME REANNOTATION</scope>
    <source>
        <strain>Berkeley</strain>
    </source>
</reference>
<reference evidence="10" key="4">
    <citation type="journal article" date="2002" name="Genome Biol.">
        <title>A Drosophila full-length cDNA resource.</title>
        <authorList>
            <person name="Stapleton M."/>
            <person name="Carlson J.W."/>
            <person name="Brokstein P."/>
            <person name="Yu C."/>
            <person name="Champe M."/>
            <person name="George R.A."/>
            <person name="Guarin H."/>
            <person name="Kronmiller B."/>
            <person name="Pacleb J.M."/>
            <person name="Park S."/>
            <person name="Wan K.H."/>
            <person name="Rubin G.M."/>
            <person name="Celniker S.E."/>
        </authorList>
    </citation>
    <scope>NUCLEOTIDE SEQUENCE [LARGE SCALE MRNA]</scope>
    <source>
        <strain evidence="10">Berkeley</strain>
        <tissue evidence="5">Embryo</tissue>
    </source>
</reference>
<reference evidence="8" key="5">
    <citation type="journal article" date="2001" name="Mol. Cell. Biol.">
        <title>Prodos is a conserved transcriptional regulator that interacts with dTAF(II)16 in Drosophila melanogaster.</title>
        <authorList>
            <person name="Hernandez-Hernandez A."/>
            <person name="Ferrus A."/>
        </authorList>
    </citation>
    <scope>FUNCTION</scope>
    <scope>INTERACTION WITH TAF10B</scope>
</reference>
<reference key="6">
    <citation type="journal article" date="2008" name="J. Proteome Res.">
        <title>Phosphoproteome analysis of Drosophila melanogaster embryos.</title>
        <authorList>
            <person name="Zhai B."/>
            <person name="Villen J."/>
            <person name="Beausoleil S.A."/>
            <person name="Mintseris J."/>
            <person name="Gygi S.P."/>
        </authorList>
    </citation>
    <scope>PHOSPHORYLATION [LARGE SCALE ANALYSIS] AT SER-236; SER-245 AND SER-255</scope>
    <scope>IDENTIFICATION BY MASS SPECTROMETRY</scope>
    <source>
        <tissue>Embryo</tissue>
    </source>
</reference>